<protein>
    <recommendedName>
        <fullName>Citrate synthase</fullName>
        <ecNumber>2.3.3.16</ecNumber>
    </recommendedName>
</protein>
<evidence type="ECO:0000255" key="1">
    <source>
        <dbReference type="PROSITE-ProRule" id="PRU10117"/>
    </source>
</evidence>
<evidence type="ECO:0000305" key="2"/>
<sequence>MSNRKAKLSFENQSVEFPIYSPTLGKDVIDVKTLGNHGAYALDVGFYSTAACESKITFIDGEKGILLYRGYPIDQLADKSDYMEVCYLLMYGELPNKGEKEKFVRTIKEHTSVYEQVTKFFNGFHYDAHPMAMVLSTIGALSAFYHDALDITKPADRELSAIRLIAKMPTLAAMSYKYSIGQPFMHPRRAMNYAENFLHMLFGTPYEETEPDPVLARAMDRIFILHADHEQNASTTTVRVAGSTGANPFACISAGISALWGPAHGGANEACLNMLRKIGDEKNIGQYIKKAKDKNDPFRLMGFGHRVYKNYDPRAKVMQKTCYEVLDAVGRHNEPLFKLAIKLEKIALEDDYFIEKKLYPNVDFYSGLTLNAIGIPSNMFTVIFALSRTVGWISHWMEMMSSPDHRLARPRQLYTGETEREVISLDKRQA</sequence>
<comment type="catalytic activity">
    <reaction evidence="1">
        <text>oxaloacetate + acetyl-CoA + H2O = citrate + CoA + H(+)</text>
        <dbReference type="Rhea" id="RHEA:16845"/>
        <dbReference type="ChEBI" id="CHEBI:15377"/>
        <dbReference type="ChEBI" id="CHEBI:15378"/>
        <dbReference type="ChEBI" id="CHEBI:16452"/>
        <dbReference type="ChEBI" id="CHEBI:16947"/>
        <dbReference type="ChEBI" id="CHEBI:57287"/>
        <dbReference type="ChEBI" id="CHEBI:57288"/>
        <dbReference type="EC" id="2.3.3.16"/>
    </reaction>
</comment>
<comment type="activity regulation">
    <text>Allosterically inhibited by NADH.</text>
</comment>
<comment type="pathway">
    <text>Carbohydrate metabolism; tricarboxylic acid cycle; isocitrate from oxaloacetate: step 1/2.</text>
</comment>
<comment type="subunit">
    <text>Homohexamer.</text>
</comment>
<comment type="miscellaneous">
    <text>Citrate synthase is found in nearly all cells capable of oxidative metabolism.</text>
</comment>
<comment type="similarity">
    <text evidence="2">Belongs to the citrate synthase family.</text>
</comment>
<accession>P18789</accession>
<reference key="1">
    <citation type="journal article" date="1991" name="Gene">
        <title>Sequence and linkage analysis of the Coxiella burnetii citrate synthase-encoding gene.</title>
        <authorList>
            <person name="Heinzen R.A."/>
            <person name="Frazier M.E."/>
            <person name="Mallavia L.P."/>
        </authorList>
    </citation>
    <scope>NUCLEOTIDE SEQUENCE [GENOMIC DNA]</scope>
</reference>
<reference key="2">
    <citation type="journal article" date="2003" name="Proc. Natl. Acad. Sci. U.S.A.">
        <title>Complete genome sequence of the Q-fever pathogen, Coxiella burnetii.</title>
        <authorList>
            <person name="Seshadri R."/>
            <person name="Paulsen I.T."/>
            <person name="Eisen J.A."/>
            <person name="Read T.D."/>
            <person name="Nelson K.E."/>
            <person name="Nelson W.C."/>
            <person name="Ward N.L."/>
            <person name="Tettelin H."/>
            <person name="Davidsen T.M."/>
            <person name="Beanan M.J."/>
            <person name="DeBoy R.T."/>
            <person name="Daugherty S.C."/>
            <person name="Brinkac L.M."/>
            <person name="Madupu R."/>
            <person name="Dodson R.J."/>
            <person name="Khouri H.M."/>
            <person name="Lee K.H."/>
            <person name="Carty H.A."/>
            <person name="Scanlan D."/>
            <person name="Heinzen R.A."/>
            <person name="Thompson H.A."/>
            <person name="Samuel J.E."/>
            <person name="Fraser C.M."/>
            <person name="Heidelberg J.F."/>
        </authorList>
    </citation>
    <scope>NUCLEOTIDE SEQUENCE [LARGE SCALE GENOMIC DNA]</scope>
    <source>
        <strain>RSA 493 / Nine Mile phase I</strain>
    </source>
</reference>
<reference key="3">
    <citation type="journal article" date="1995" name="Gene">
        <title>Characterization of the succinate dehydrogenase-encoding gene cluster (sdh) from the rickettsia Coxiella burnetii.</title>
        <authorList>
            <person name="Heinzen R.A."/>
            <person name="Mo Y.-Y."/>
            <person name="Robertson S.J."/>
            <person name="Mallavia L.P."/>
        </authorList>
    </citation>
    <scope>NUCLEOTIDE SEQUENCE [GENOMIC DNA] OF 1-8</scope>
    <source>
        <strain>Nine Mile</strain>
    </source>
</reference>
<proteinExistence type="inferred from homology"/>
<feature type="chain" id="PRO_0000169941" description="Citrate synthase">
    <location>
        <begin position="1"/>
        <end position="430"/>
    </location>
</feature>
<feature type="active site" evidence="1">
    <location>
        <position position="305"/>
    </location>
</feature>
<feature type="active site" evidence="1">
    <location>
        <position position="363"/>
    </location>
</feature>
<organism>
    <name type="scientific">Coxiella burnetii (strain RSA 493 / Nine Mile phase I)</name>
    <dbReference type="NCBI Taxonomy" id="227377"/>
    <lineage>
        <taxon>Bacteria</taxon>
        <taxon>Pseudomonadati</taxon>
        <taxon>Pseudomonadota</taxon>
        <taxon>Gammaproteobacteria</taxon>
        <taxon>Legionellales</taxon>
        <taxon>Coxiellaceae</taxon>
        <taxon>Coxiella</taxon>
    </lineage>
</organism>
<gene>
    <name type="primary">gltA</name>
    <name type="ordered locus">CBU_1410</name>
</gene>
<keyword id="KW-0021">Allosteric enzyme</keyword>
<keyword id="KW-1185">Reference proteome</keyword>
<keyword id="KW-0808">Transferase</keyword>
<keyword id="KW-0816">Tricarboxylic acid cycle</keyword>
<name>CISY_COXBU</name>
<dbReference type="EC" id="2.3.3.16"/>
<dbReference type="EMBL" id="M36338">
    <property type="protein sequence ID" value="AAA23307.1"/>
    <property type="molecule type" value="Genomic_DNA"/>
</dbReference>
<dbReference type="EMBL" id="AE016828">
    <property type="protein sequence ID" value="AAO90908.1"/>
    <property type="molecule type" value="Genomic_DNA"/>
</dbReference>
<dbReference type="EMBL" id="L33409">
    <property type="protein sequence ID" value="AAA74128.1"/>
    <property type="molecule type" value="Genomic_DNA"/>
</dbReference>
<dbReference type="PIR" id="JQ1392">
    <property type="entry name" value="JQ1392"/>
</dbReference>
<dbReference type="RefSeq" id="NP_820394.1">
    <property type="nucleotide sequence ID" value="NC_002971.4"/>
</dbReference>
<dbReference type="RefSeq" id="WP_010958208.1">
    <property type="nucleotide sequence ID" value="NC_002971.4"/>
</dbReference>
<dbReference type="SMR" id="P18789"/>
<dbReference type="STRING" id="227377.CBU_1410"/>
<dbReference type="DNASU" id="1209316"/>
<dbReference type="EnsemblBacteria" id="AAO90908">
    <property type="protein sequence ID" value="AAO90908"/>
    <property type="gene ID" value="CBU_1410"/>
</dbReference>
<dbReference type="GeneID" id="1209316"/>
<dbReference type="KEGG" id="cbu:CBU_1410"/>
<dbReference type="PATRIC" id="fig|227377.7.peg.1410"/>
<dbReference type="eggNOG" id="COG0372">
    <property type="taxonomic scope" value="Bacteria"/>
</dbReference>
<dbReference type="HOGENOM" id="CLU_025068_0_0_6"/>
<dbReference type="OrthoDB" id="9800864at2"/>
<dbReference type="UniPathway" id="UPA00223">
    <property type="reaction ID" value="UER00717"/>
</dbReference>
<dbReference type="Proteomes" id="UP000002671">
    <property type="component" value="Chromosome"/>
</dbReference>
<dbReference type="GO" id="GO:0005737">
    <property type="term" value="C:cytoplasm"/>
    <property type="evidence" value="ECO:0007669"/>
    <property type="project" value="InterPro"/>
</dbReference>
<dbReference type="GO" id="GO:0004108">
    <property type="term" value="F:citrate (Si)-synthase activity"/>
    <property type="evidence" value="ECO:0007669"/>
    <property type="project" value="InterPro"/>
</dbReference>
<dbReference type="GO" id="GO:0006099">
    <property type="term" value="P:tricarboxylic acid cycle"/>
    <property type="evidence" value="ECO:0007669"/>
    <property type="project" value="UniProtKB-UniPathway"/>
</dbReference>
<dbReference type="CDD" id="cd06114">
    <property type="entry name" value="EcCS_like"/>
    <property type="match status" value="1"/>
</dbReference>
<dbReference type="FunFam" id="1.10.230.10:FF:000002">
    <property type="entry name" value="Citrate synthase"/>
    <property type="match status" value="1"/>
</dbReference>
<dbReference type="Gene3D" id="2.20.28.60">
    <property type="match status" value="1"/>
</dbReference>
<dbReference type="Gene3D" id="1.10.580.10">
    <property type="entry name" value="Citrate Synthase, domain 1"/>
    <property type="match status" value="1"/>
</dbReference>
<dbReference type="Gene3D" id="1.10.230.10">
    <property type="entry name" value="Cytochrome P450-Terp, domain 2"/>
    <property type="match status" value="1"/>
</dbReference>
<dbReference type="InterPro" id="IPR016142">
    <property type="entry name" value="Citrate_synth-like_lrg_a-sub"/>
</dbReference>
<dbReference type="InterPro" id="IPR016143">
    <property type="entry name" value="Citrate_synth-like_sm_a-sub"/>
</dbReference>
<dbReference type="InterPro" id="IPR002020">
    <property type="entry name" value="Citrate_synthase"/>
</dbReference>
<dbReference type="InterPro" id="IPR019810">
    <property type="entry name" value="Citrate_synthase_AS"/>
</dbReference>
<dbReference type="InterPro" id="IPR024176">
    <property type="entry name" value="Citrate_synthase_bac-typ"/>
</dbReference>
<dbReference type="InterPro" id="IPR036969">
    <property type="entry name" value="Citrate_synthase_sf"/>
</dbReference>
<dbReference type="InterPro" id="IPR010953">
    <property type="entry name" value="Citrate_synthase_typ-I"/>
</dbReference>
<dbReference type="NCBIfam" id="TIGR01798">
    <property type="entry name" value="cit_synth_I"/>
    <property type="match status" value="1"/>
</dbReference>
<dbReference type="NCBIfam" id="NF004126">
    <property type="entry name" value="PRK05614.1"/>
    <property type="match status" value="1"/>
</dbReference>
<dbReference type="PANTHER" id="PTHR42871">
    <property type="entry name" value="CITRATE SYNTHASE"/>
    <property type="match status" value="1"/>
</dbReference>
<dbReference type="PANTHER" id="PTHR42871:SF1">
    <property type="entry name" value="CITRATE SYNTHASE"/>
    <property type="match status" value="1"/>
</dbReference>
<dbReference type="Pfam" id="PF00285">
    <property type="entry name" value="Citrate_synt"/>
    <property type="match status" value="1"/>
</dbReference>
<dbReference type="PIRSF" id="PIRSF001369">
    <property type="entry name" value="Citrate_synth"/>
    <property type="match status" value="1"/>
</dbReference>
<dbReference type="PRINTS" id="PR00143">
    <property type="entry name" value="CITRTSNTHASE"/>
</dbReference>
<dbReference type="SUPFAM" id="SSF48256">
    <property type="entry name" value="Citrate synthase"/>
    <property type="match status" value="1"/>
</dbReference>
<dbReference type="PROSITE" id="PS00480">
    <property type="entry name" value="CITRATE_SYNTHASE"/>
    <property type="match status" value="1"/>
</dbReference>